<dbReference type="EC" id="1.14.11.-" evidence="7"/>
<dbReference type="EMBL" id="LC331673">
    <property type="protein sequence ID" value="BBA91553.1"/>
    <property type="molecule type" value="Genomic_DNA"/>
</dbReference>
<dbReference type="SMR" id="A0A2Z5TIR0"/>
<dbReference type="GO" id="GO:0051213">
    <property type="term" value="F:dioxygenase activity"/>
    <property type="evidence" value="ECO:0007669"/>
    <property type="project" value="UniProtKB-KW"/>
</dbReference>
<dbReference type="GO" id="GO:0046872">
    <property type="term" value="F:metal ion binding"/>
    <property type="evidence" value="ECO:0007669"/>
    <property type="project" value="UniProtKB-KW"/>
</dbReference>
<dbReference type="GO" id="GO:0009058">
    <property type="term" value="P:biosynthetic process"/>
    <property type="evidence" value="ECO:0007669"/>
    <property type="project" value="UniProtKB-ARBA"/>
</dbReference>
<dbReference type="Gene3D" id="2.60.120.620">
    <property type="entry name" value="q2cbj1_9rhob like domain"/>
    <property type="match status" value="1"/>
</dbReference>
<dbReference type="InterPro" id="IPR008775">
    <property type="entry name" value="Phytyl_CoA_dOase-like"/>
</dbReference>
<dbReference type="PANTHER" id="PTHR20883">
    <property type="entry name" value="PHYTANOYL-COA DIOXYGENASE DOMAIN CONTAINING 1"/>
    <property type="match status" value="1"/>
</dbReference>
<dbReference type="PANTHER" id="PTHR20883:SF45">
    <property type="entry name" value="PHYTANOYL-COA DIOXYGENASE FAMILY PROTEIN"/>
    <property type="match status" value="1"/>
</dbReference>
<dbReference type="Pfam" id="PF05721">
    <property type="entry name" value="PhyH"/>
    <property type="match status" value="1"/>
</dbReference>
<dbReference type="SUPFAM" id="SSF51197">
    <property type="entry name" value="Clavaminate synthase-like"/>
    <property type="match status" value="1"/>
</dbReference>
<protein>
    <recommendedName>
        <fullName evidence="5">Dioxygenase himG</fullName>
        <ecNumber evidence="7">1.14.11.-</ecNumber>
    </recommendedName>
    <alternativeName>
        <fullName evidence="5">Himeic acid A biosynthesis cluster protein G</fullName>
    </alternativeName>
</protein>
<accession>A0A2Z5TIR0</accession>
<sequence>MAPALTQSLNGATPQVKAALHHLDANTVSIDDIIHYLKHHGGVVVQNLISEEILQEVGADIKPYFDALVEPGFFSSKTRIVTRLPNKSIAFVEKIFGNQVFQDICDHFLTSHHRGWYGNEQYTYSPHPVFNSALAFSTLPGNETQSLHRECMGQHNKLPAIAPEDYPIGRDTVLGMFVADTRTTRENGATRFIPGSHLQSTLDPPDESQTVPVEMNRGDVFLMLGSCYHGASANVSQAEERILYSTFMTQSTRRQLTTCLFLVQEENIYLSVPVDRVRVFSPRMQKRLGFSASDPLFGWVDVKDPRKVFNLPGLSEGQHIDV</sequence>
<feature type="chain" id="PRO_0000445955" description="Dioxygenase himG">
    <location>
        <begin position="1"/>
        <end position="322"/>
    </location>
</feature>
<feature type="binding site" evidence="1">
    <location>
        <position position="148"/>
    </location>
    <ligand>
        <name>Fe cation</name>
        <dbReference type="ChEBI" id="CHEBI:24875"/>
    </ligand>
</feature>
<feature type="binding site" evidence="1">
    <location>
        <position position="229"/>
    </location>
    <ligand>
        <name>Fe cation</name>
        <dbReference type="ChEBI" id="CHEBI:24875"/>
    </ligand>
</feature>
<keyword id="KW-0223">Dioxygenase</keyword>
<keyword id="KW-0408">Iron</keyword>
<keyword id="KW-0479">Metal-binding</keyword>
<keyword id="KW-0560">Oxidoreductase</keyword>
<proteinExistence type="inferred from homology"/>
<evidence type="ECO:0000250" key="1">
    <source>
        <dbReference type="UniProtKB" id="O14832"/>
    </source>
</evidence>
<evidence type="ECO:0000250" key="2">
    <source>
        <dbReference type="UniProtKB" id="Q4WAW9"/>
    </source>
</evidence>
<evidence type="ECO:0000269" key="3">
    <source>
    </source>
</evidence>
<evidence type="ECO:0000269" key="4">
    <source>
    </source>
</evidence>
<evidence type="ECO:0000303" key="5">
    <source>
    </source>
</evidence>
<evidence type="ECO:0000305" key="6"/>
<evidence type="ECO:0000305" key="7">
    <source>
    </source>
</evidence>
<gene>
    <name evidence="5" type="primary">himG</name>
</gene>
<reference key="1">
    <citation type="journal article" date="2018" name="ChemBioChem">
        <title>Identification of the biosynthetic gene cluster for himeic acid A: a ubiquitin-activating enzyme (E1) inhibitor in Aspergillus japonicus MF275.</title>
        <authorList>
            <person name="Hashimoto M."/>
            <person name="Kato H."/>
            <person name="Katsuki A."/>
            <person name="Tsukamoto S."/>
            <person name="Fujii I."/>
        </authorList>
    </citation>
    <scope>NUCLEOTIDE SEQUENCE [GENOMIC DNA]</scope>
    <scope>FUNCTION</scope>
    <scope>PATHWAY</scope>
    <source>
        <strain>MF275</strain>
    </source>
</reference>
<reference key="2">
    <citation type="journal article" date="2018" name="Bioorg. Med. Chem.">
        <title>pH-dependent production of himeic acid A and its non-enzymatic conversions to himeic acids B and C.</title>
        <authorList>
            <person name="Katsuki A."/>
            <person name="Kato H."/>
            <person name="Tahara Y."/>
            <person name="Hashimoto M."/>
            <person name="Fujii I."/>
            <person name="Tsukamoto S."/>
        </authorList>
    </citation>
    <scope>FUNCTION</scope>
</reference>
<comment type="function">
    <text evidence="3 4 7">Polyketide synthase-nonribosomal peptide synthetase; part of the him gene cluster that mediates the biosynthesis of himeic acid A, a ubiquitin-activating enzyme (E1) inhibitor (PubMed:29314577). First, himA, together with the trans-enoyl reductase himH, catalyzes the formation of apolyketide chain, which is then condensed with leucine by the NRPS activity of himA. Dieckmann cyclization and release from himA gives a tetramic acid intermediate as the product of himA PKS-NRPS (PubMed:29314577). HimG then catalyzes alpha-oxidation of the tetramic acid ring, with a subsequent rearrangement to yield apyrone intermediate (Probable). Two terminal methyl groups of polyketide and amide side chains are oxidized to carboxylic acids by himC cytochrome P450 monooxygenase to form himeic acid A (Probable). Himeic acid A is further converted to himeic acid B and C during culture growth. No gene responsible for pyrone to pyridone conversion was found in the him gene cluster and himeic acid A is non-enzymatically converted to himeic acid C by the incorporation of an ammonium nitrogen atom in a pH5 buffer, and to himeic acid B at a conversion ratio of 50% during incubation in MeOH for 5 days (PubMed:29486950).</text>
</comment>
<comment type="cofactor">
    <cofactor evidence="2">
        <name>Fe cation</name>
        <dbReference type="ChEBI" id="CHEBI:24875"/>
    </cofactor>
</comment>
<comment type="pathway">
    <text evidence="7">Secondary metabolite biosynthesis.</text>
</comment>
<comment type="subunit">
    <text evidence="2">Homodimer.</text>
</comment>
<comment type="similarity">
    <text evidence="6">Belongs to the PhyH family.</text>
</comment>
<organism>
    <name type="scientific">Aspergillus japonicus</name>
    <dbReference type="NCBI Taxonomy" id="34381"/>
    <lineage>
        <taxon>Eukaryota</taxon>
        <taxon>Fungi</taxon>
        <taxon>Dikarya</taxon>
        <taxon>Ascomycota</taxon>
        <taxon>Pezizomycotina</taxon>
        <taxon>Eurotiomycetes</taxon>
        <taxon>Eurotiomycetidae</taxon>
        <taxon>Eurotiales</taxon>
        <taxon>Aspergillaceae</taxon>
        <taxon>Aspergillus</taxon>
        <taxon>Aspergillus subgen. Circumdati</taxon>
    </lineage>
</organism>
<name>HIMG_ASPJA</name>